<name>GCH1_MYCA9</name>
<dbReference type="EC" id="3.5.4.16" evidence="1"/>
<dbReference type="EMBL" id="CU458896">
    <property type="protein sequence ID" value="CAM60633.1"/>
    <property type="molecule type" value="Genomic_DNA"/>
</dbReference>
<dbReference type="RefSeq" id="WP_005113137.1">
    <property type="nucleotide sequence ID" value="NZ_MLCG01000009.1"/>
</dbReference>
<dbReference type="SMR" id="B1MGU9"/>
<dbReference type="GeneID" id="93377481"/>
<dbReference type="KEGG" id="mab:MAB_0534"/>
<dbReference type="UniPathway" id="UPA00848">
    <property type="reaction ID" value="UER00151"/>
</dbReference>
<dbReference type="Proteomes" id="UP000007137">
    <property type="component" value="Chromosome"/>
</dbReference>
<dbReference type="GO" id="GO:0005737">
    <property type="term" value="C:cytoplasm"/>
    <property type="evidence" value="ECO:0007669"/>
    <property type="project" value="TreeGrafter"/>
</dbReference>
<dbReference type="GO" id="GO:0005525">
    <property type="term" value="F:GTP binding"/>
    <property type="evidence" value="ECO:0007669"/>
    <property type="project" value="UniProtKB-KW"/>
</dbReference>
<dbReference type="GO" id="GO:0003934">
    <property type="term" value="F:GTP cyclohydrolase I activity"/>
    <property type="evidence" value="ECO:0007669"/>
    <property type="project" value="UniProtKB-UniRule"/>
</dbReference>
<dbReference type="GO" id="GO:0008270">
    <property type="term" value="F:zinc ion binding"/>
    <property type="evidence" value="ECO:0007669"/>
    <property type="project" value="UniProtKB-UniRule"/>
</dbReference>
<dbReference type="GO" id="GO:0006730">
    <property type="term" value="P:one-carbon metabolic process"/>
    <property type="evidence" value="ECO:0007669"/>
    <property type="project" value="UniProtKB-UniRule"/>
</dbReference>
<dbReference type="GO" id="GO:0006729">
    <property type="term" value="P:tetrahydrobiopterin biosynthetic process"/>
    <property type="evidence" value="ECO:0007669"/>
    <property type="project" value="TreeGrafter"/>
</dbReference>
<dbReference type="GO" id="GO:0046654">
    <property type="term" value="P:tetrahydrofolate biosynthetic process"/>
    <property type="evidence" value="ECO:0007669"/>
    <property type="project" value="UniProtKB-UniRule"/>
</dbReference>
<dbReference type="FunFam" id="1.10.286.10:FF:000001">
    <property type="entry name" value="GTP cyclohydrolase 1"/>
    <property type="match status" value="1"/>
</dbReference>
<dbReference type="FunFam" id="3.30.1130.10:FF:000001">
    <property type="entry name" value="GTP cyclohydrolase 1"/>
    <property type="match status" value="1"/>
</dbReference>
<dbReference type="Gene3D" id="1.10.286.10">
    <property type="match status" value="1"/>
</dbReference>
<dbReference type="Gene3D" id="3.30.1130.10">
    <property type="match status" value="1"/>
</dbReference>
<dbReference type="HAMAP" id="MF_00223">
    <property type="entry name" value="FolE"/>
    <property type="match status" value="1"/>
</dbReference>
<dbReference type="InterPro" id="IPR043133">
    <property type="entry name" value="GTP-CH-I_C/QueF"/>
</dbReference>
<dbReference type="InterPro" id="IPR043134">
    <property type="entry name" value="GTP-CH-I_N"/>
</dbReference>
<dbReference type="InterPro" id="IPR001474">
    <property type="entry name" value="GTP_CycHdrlase_I"/>
</dbReference>
<dbReference type="InterPro" id="IPR018234">
    <property type="entry name" value="GTP_CycHdrlase_I_CS"/>
</dbReference>
<dbReference type="InterPro" id="IPR020602">
    <property type="entry name" value="GTP_CycHdrlase_I_dom"/>
</dbReference>
<dbReference type="NCBIfam" id="TIGR00063">
    <property type="entry name" value="folE"/>
    <property type="match status" value="1"/>
</dbReference>
<dbReference type="NCBIfam" id="NF006825">
    <property type="entry name" value="PRK09347.1-2"/>
    <property type="match status" value="1"/>
</dbReference>
<dbReference type="NCBIfam" id="NF006826">
    <property type="entry name" value="PRK09347.1-3"/>
    <property type="match status" value="1"/>
</dbReference>
<dbReference type="PANTHER" id="PTHR11109:SF7">
    <property type="entry name" value="GTP CYCLOHYDROLASE 1"/>
    <property type="match status" value="1"/>
</dbReference>
<dbReference type="PANTHER" id="PTHR11109">
    <property type="entry name" value="GTP CYCLOHYDROLASE I"/>
    <property type="match status" value="1"/>
</dbReference>
<dbReference type="Pfam" id="PF01227">
    <property type="entry name" value="GTP_cyclohydroI"/>
    <property type="match status" value="1"/>
</dbReference>
<dbReference type="SUPFAM" id="SSF55620">
    <property type="entry name" value="Tetrahydrobiopterin biosynthesis enzymes-like"/>
    <property type="match status" value="1"/>
</dbReference>
<dbReference type="PROSITE" id="PS00859">
    <property type="entry name" value="GTP_CYCLOHYDROL_1_1"/>
    <property type="match status" value="1"/>
</dbReference>
<dbReference type="PROSITE" id="PS00860">
    <property type="entry name" value="GTP_CYCLOHYDROL_1_2"/>
    <property type="match status" value="1"/>
</dbReference>
<evidence type="ECO:0000255" key="1">
    <source>
        <dbReference type="HAMAP-Rule" id="MF_00223"/>
    </source>
</evidence>
<feature type="chain" id="PRO_1000100184" description="GTP cyclohydrolase 1">
    <location>
        <begin position="1"/>
        <end position="204"/>
    </location>
</feature>
<feature type="binding site" evidence="1">
    <location>
        <position position="92"/>
    </location>
    <ligand>
        <name>Zn(2+)</name>
        <dbReference type="ChEBI" id="CHEBI:29105"/>
    </ligand>
</feature>
<feature type="binding site" evidence="1">
    <location>
        <position position="95"/>
    </location>
    <ligand>
        <name>Zn(2+)</name>
        <dbReference type="ChEBI" id="CHEBI:29105"/>
    </ligand>
</feature>
<feature type="binding site" evidence="1">
    <location>
        <position position="165"/>
    </location>
    <ligand>
        <name>Zn(2+)</name>
        <dbReference type="ChEBI" id="CHEBI:29105"/>
    </ligand>
</feature>
<reference key="1">
    <citation type="journal article" date="2009" name="PLoS ONE">
        <title>Non mycobacterial virulence genes in the genome of the emerging pathogen Mycobacterium abscessus.</title>
        <authorList>
            <person name="Ripoll F."/>
            <person name="Pasek S."/>
            <person name="Schenowitz C."/>
            <person name="Dossat C."/>
            <person name="Barbe V."/>
            <person name="Rottman M."/>
            <person name="Macheras E."/>
            <person name="Heym B."/>
            <person name="Herrmann J.L."/>
            <person name="Daffe M."/>
            <person name="Brosch R."/>
            <person name="Risler J.L."/>
            <person name="Gaillard J.L."/>
        </authorList>
    </citation>
    <scope>NUCLEOTIDE SEQUENCE [LARGE SCALE GENOMIC DNA]</scope>
    <source>
        <strain>ATCC 19977 / DSM 44196 / CCUG 20993 / CIP 104536 / JCM 13569 / NCTC 13031 / TMC 1543 / L948</strain>
    </source>
</reference>
<organism>
    <name type="scientific">Mycobacteroides abscessus (strain ATCC 19977 / DSM 44196 / CCUG 20993 / CIP 104536 / JCM 13569 / NCTC 13031 / TMC 1543 / L948)</name>
    <name type="common">Mycobacterium abscessus</name>
    <dbReference type="NCBI Taxonomy" id="561007"/>
    <lineage>
        <taxon>Bacteria</taxon>
        <taxon>Bacillati</taxon>
        <taxon>Actinomycetota</taxon>
        <taxon>Actinomycetes</taxon>
        <taxon>Mycobacteriales</taxon>
        <taxon>Mycobacteriaceae</taxon>
        <taxon>Mycobacteroides</taxon>
        <taxon>Mycobacteroides abscessus</taxon>
    </lineage>
</organism>
<gene>
    <name evidence="1" type="primary">folE</name>
    <name type="ordered locus">MAB_0534</name>
</gene>
<comment type="catalytic activity">
    <reaction evidence="1">
        <text>GTP + H2O = 7,8-dihydroneopterin 3'-triphosphate + formate + H(+)</text>
        <dbReference type="Rhea" id="RHEA:17473"/>
        <dbReference type="ChEBI" id="CHEBI:15377"/>
        <dbReference type="ChEBI" id="CHEBI:15378"/>
        <dbReference type="ChEBI" id="CHEBI:15740"/>
        <dbReference type="ChEBI" id="CHEBI:37565"/>
        <dbReference type="ChEBI" id="CHEBI:58462"/>
        <dbReference type="EC" id="3.5.4.16"/>
    </reaction>
</comment>
<comment type="pathway">
    <text evidence="1">Cofactor biosynthesis; 7,8-dihydroneopterin triphosphate biosynthesis; 7,8-dihydroneopterin triphosphate from GTP: step 1/1.</text>
</comment>
<comment type="subunit">
    <text evidence="1">Homomer.</text>
</comment>
<comment type="similarity">
    <text evidence="1">Belongs to the GTP cyclohydrolase I family.</text>
</comment>
<keyword id="KW-0342">GTP-binding</keyword>
<keyword id="KW-0378">Hydrolase</keyword>
<keyword id="KW-0479">Metal-binding</keyword>
<keyword id="KW-0547">Nucleotide-binding</keyword>
<keyword id="KW-0554">One-carbon metabolism</keyword>
<keyword id="KW-1185">Reference proteome</keyword>
<keyword id="KW-0862">Zinc</keyword>
<sequence>MNSPETAEYNGHPTGHVFDQARAEAAVRELLYAVGEDPDRHGLADTPARVARAYREIFAGLYTDPDTVLNTTFDEQHDELVLVKSIPMYSTCEHHLVSFHGVAHVGYIPGQHGRVTGLSKIARLVDLYAKRPQVQERLTAQIADALVRKLEPRGVIVVVEAEHLCMAMRGVRKPGATTTTSAVRGQFKRDAASRAEVLDLMMRT</sequence>
<protein>
    <recommendedName>
        <fullName evidence="1">GTP cyclohydrolase 1</fullName>
        <ecNumber evidence="1">3.5.4.16</ecNumber>
    </recommendedName>
    <alternativeName>
        <fullName evidence="1">GTP cyclohydrolase I</fullName>
        <shortName evidence="1">GTP-CH-I</shortName>
    </alternativeName>
</protein>
<accession>B1MGU9</accession>
<proteinExistence type="inferred from homology"/>